<keyword id="KW-0025">Alternative splicing</keyword>
<keyword id="KW-0963">Cytoplasm</keyword>
<keyword id="KW-0449">Lipoprotein</keyword>
<keyword id="KW-0479">Metal-binding</keyword>
<keyword id="KW-0519">Myristate</keyword>
<keyword id="KW-1185">Reference proteome</keyword>
<keyword id="KW-0808">Transferase</keyword>
<keyword id="KW-0833">Ubl conjugation pathway</keyword>
<keyword id="KW-0862">Zinc</keyword>
<keyword id="KW-0863">Zinc-finger</keyword>
<accession>Q3TEL6</accession>
<accession>Q80T75</accession>
<reference key="1">
    <citation type="journal article" date="2009" name="PLoS Biol.">
        <title>Lineage-specific biology revealed by a finished genome assembly of the mouse.</title>
        <authorList>
            <person name="Church D.M."/>
            <person name="Goodstadt L."/>
            <person name="Hillier L.W."/>
            <person name="Zody M.C."/>
            <person name="Goldstein S."/>
            <person name="She X."/>
            <person name="Bult C.J."/>
            <person name="Agarwala R."/>
            <person name="Cherry J.L."/>
            <person name="DiCuccio M."/>
            <person name="Hlavina W."/>
            <person name="Kapustin Y."/>
            <person name="Meric P."/>
            <person name="Maglott D."/>
            <person name="Birtle Z."/>
            <person name="Marques A.C."/>
            <person name="Graves T."/>
            <person name="Zhou S."/>
            <person name="Teague B."/>
            <person name="Potamousis K."/>
            <person name="Churas C."/>
            <person name="Place M."/>
            <person name="Herschleb J."/>
            <person name="Runnheim R."/>
            <person name="Forrest D."/>
            <person name="Amos-Landgraf J."/>
            <person name="Schwartz D.C."/>
            <person name="Cheng Z."/>
            <person name="Lindblad-Toh K."/>
            <person name="Eichler E.E."/>
            <person name="Ponting C.P."/>
        </authorList>
    </citation>
    <scope>NUCLEOTIDE SEQUENCE [LARGE SCALE GENOMIC DNA]</scope>
    <source>
        <strain>C57BL/6J</strain>
    </source>
</reference>
<reference key="2">
    <citation type="journal article" date="2005" name="Science">
        <title>The transcriptional landscape of the mammalian genome.</title>
        <authorList>
            <person name="Carninci P."/>
            <person name="Kasukawa T."/>
            <person name="Katayama S."/>
            <person name="Gough J."/>
            <person name="Frith M.C."/>
            <person name="Maeda N."/>
            <person name="Oyama R."/>
            <person name="Ravasi T."/>
            <person name="Lenhard B."/>
            <person name="Wells C."/>
            <person name="Kodzius R."/>
            <person name="Shimokawa K."/>
            <person name="Bajic V.B."/>
            <person name="Brenner S.E."/>
            <person name="Batalov S."/>
            <person name="Forrest A.R."/>
            <person name="Zavolan M."/>
            <person name="Davis M.J."/>
            <person name="Wilming L.G."/>
            <person name="Aidinis V."/>
            <person name="Allen J.E."/>
            <person name="Ambesi-Impiombato A."/>
            <person name="Apweiler R."/>
            <person name="Aturaliya R.N."/>
            <person name="Bailey T.L."/>
            <person name="Bansal M."/>
            <person name="Baxter L."/>
            <person name="Beisel K.W."/>
            <person name="Bersano T."/>
            <person name="Bono H."/>
            <person name="Chalk A.M."/>
            <person name="Chiu K.P."/>
            <person name="Choudhary V."/>
            <person name="Christoffels A."/>
            <person name="Clutterbuck D.R."/>
            <person name="Crowe M.L."/>
            <person name="Dalla E."/>
            <person name="Dalrymple B.P."/>
            <person name="de Bono B."/>
            <person name="Della Gatta G."/>
            <person name="di Bernardo D."/>
            <person name="Down T."/>
            <person name="Engstrom P."/>
            <person name="Fagiolini M."/>
            <person name="Faulkner G."/>
            <person name="Fletcher C.F."/>
            <person name="Fukushima T."/>
            <person name="Furuno M."/>
            <person name="Futaki S."/>
            <person name="Gariboldi M."/>
            <person name="Georgii-Hemming P."/>
            <person name="Gingeras T.R."/>
            <person name="Gojobori T."/>
            <person name="Green R.E."/>
            <person name="Gustincich S."/>
            <person name="Harbers M."/>
            <person name="Hayashi Y."/>
            <person name="Hensch T.K."/>
            <person name="Hirokawa N."/>
            <person name="Hill D."/>
            <person name="Huminiecki L."/>
            <person name="Iacono M."/>
            <person name="Ikeo K."/>
            <person name="Iwama A."/>
            <person name="Ishikawa T."/>
            <person name="Jakt M."/>
            <person name="Kanapin A."/>
            <person name="Katoh M."/>
            <person name="Kawasawa Y."/>
            <person name="Kelso J."/>
            <person name="Kitamura H."/>
            <person name="Kitano H."/>
            <person name="Kollias G."/>
            <person name="Krishnan S.P."/>
            <person name="Kruger A."/>
            <person name="Kummerfeld S.K."/>
            <person name="Kurochkin I.V."/>
            <person name="Lareau L.F."/>
            <person name="Lazarevic D."/>
            <person name="Lipovich L."/>
            <person name="Liu J."/>
            <person name="Liuni S."/>
            <person name="McWilliam S."/>
            <person name="Madan Babu M."/>
            <person name="Madera M."/>
            <person name="Marchionni L."/>
            <person name="Matsuda H."/>
            <person name="Matsuzawa S."/>
            <person name="Miki H."/>
            <person name="Mignone F."/>
            <person name="Miyake S."/>
            <person name="Morris K."/>
            <person name="Mottagui-Tabar S."/>
            <person name="Mulder N."/>
            <person name="Nakano N."/>
            <person name="Nakauchi H."/>
            <person name="Ng P."/>
            <person name="Nilsson R."/>
            <person name="Nishiguchi S."/>
            <person name="Nishikawa S."/>
            <person name="Nori F."/>
            <person name="Ohara O."/>
            <person name="Okazaki Y."/>
            <person name="Orlando V."/>
            <person name="Pang K.C."/>
            <person name="Pavan W.J."/>
            <person name="Pavesi G."/>
            <person name="Pesole G."/>
            <person name="Petrovsky N."/>
            <person name="Piazza S."/>
            <person name="Reed J."/>
            <person name="Reid J.F."/>
            <person name="Ring B.Z."/>
            <person name="Ringwald M."/>
            <person name="Rost B."/>
            <person name="Ruan Y."/>
            <person name="Salzberg S.L."/>
            <person name="Sandelin A."/>
            <person name="Schneider C."/>
            <person name="Schoenbach C."/>
            <person name="Sekiguchi K."/>
            <person name="Semple C.A."/>
            <person name="Seno S."/>
            <person name="Sessa L."/>
            <person name="Sheng Y."/>
            <person name="Shibata Y."/>
            <person name="Shimada H."/>
            <person name="Shimada K."/>
            <person name="Silva D."/>
            <person name="Sinclair B."/>
            <person name="Sperling S."/>
            <person name="Stupka E."/>
            <person name="Sugiura K."/>
            <person name="Sultana R."/>
            <person name="Takenaka Y."/>
            <person name="Taki K."/>
            <person name="Tammoja K."/>
            <person name="Tan S.L."/>
            <person name="Tang S."/>
            <person name="Taylor M.S."/>
            <person name="Tegner J."/>
            <person name="Teichmann S.A."/>
            <person name="Ueda H.R."/>
            <person name="van Nimwegen E."/>
            <person name="Verardo R."/>
            <person name="Wei C.L."/>
            <person name="Yagi K."/>
            <person name="Yamanishi H."/>
            <person name="Zabarovsky E."/>
            <person name="Zhu S."/>
            <person name="Zimmer A."/>
            <person name="Hide W."/>
            <person name="Bult C."/>
            <person name="Grimmond S.M."/>
            <person name="Teasdale R.D."/>
            <person name="Liu E.T."/>
            <person name="Brusic V."/>
            <person name="Quackenbush J."/>
            <person name="Wahlestedt C."/>
            <person name="Mattick J.S."/>
            <person name="Hume D.A."/>
            <person name="Kai C."/>
            <person name="Sasaki D."/>
            <person name="Tomaru Y."/>
            <person name="Fukuda S."/>
            <person name="Kanamori-Katayama M."/>
            <person name="Suzuki M."/>
            <person name="Aoki J."/>
            <person name="Arakawa T."/>
            <person name="Iida J."/>
            <person name="Imamura K."/>
            <person name="Itoh M."/>
            <person name="Kato T."/>
            <person name="Kawaji H."/>
            <person name="Kawagashira N."/>
            <person name="Kawashima T."/>
            <person name="Kojima M."/>
            <person name="Kondo S."/>
            <person name="Konno H."/>
            <person name="Nakano K."/>
            <person name="Ninomiya N."/>
            <person name="Nishio T."/>
            <person name="Okada M."/>
            <person name="Plessy C."/>
            <person name="Shibata K."/>
            <person name="Shiraki T."/>
            <person name="Suzuki S."/>
            <person name="Tagami M."/>
            <person name="Waki K."/>
            <person name="Watahiki A."/>
            <person name="Okamura-Oho Y."/>
            <person name="Suzuki H."/>
            <person name="Kawai J."/>
            <person name="Hayashizaki Y."/>
        </authorList>
    </citation>
    <scope>NUCLEOTIDE SEQUENCE [LARGE SCALE MRNA] OF 193-685 (ISOFORM 1)</scope>
    <source>
        <strain>C57BL/6J</strain>
        <tissue>Thymus</tissue>
    </source>
</reference>
<reference key="3">
    <citation type="journal article" date="2003" name="DNA Res.">
        <title>Prediction of the coding sequences of mouse homologues of KIAA gene: II. The complete nucleotide sequences of 400 mouse KIAA-homologous cDNAs identified by screening of terminal sequences of cDNA clones randomly sampled from size-fractionated libraries.</title>
        <authorList>
            <person name="Okazaki N."/>
            <person name="Kikuno R."/>
            <person name="Ohara R."/>
            <person name="Inamoto S."/>
            <person name="Aizawa H."/>
            <person name="Yuasa S."/>
            <person name="Nakajima D."/>
            <person name="Nagase T."/>
            <person name="Ohara O."/>
            <person name="Koga H."/>
        </authorList>
    </citation>
    <scope>NUCLEOTIDE SEQUENCE [LARGE SCALE MRNA] OF 340-685 (ISOFORM 2)</scope>
    <source>
        <tissue>Brain</tissue>
    </source>
</reference>
<reference key="4">
    <citation type="journal article" date="2010" name="Cell">
        <title>A tissue-specific atlas of mouse protein phosphorylation and expression.</title>
        <authorList>
            <person name="Huttlin E.L."/>
            <person name="Jedrychowski M.P."/>
            <person name="Elias J.E."/>
            <person name="Goswami T."/>
            <person name="Rad R."/>
            <person name="Beausoleil S.A."/>
            <person name="Villen J."/>
            <person name="Haas W."/>
            <person name="Sowa M.E."/>
            <person name="Gygi S.P."/>
        </authorList>
    </citation>
    <scope>IDENTIFICATION BY MASS SPECTROMETRY [LARGE SCALE ANALYSIS]</scope>
    <source>
        <tissue>Brain</tissue>
    </source>
</reference>
<reference key="5">
    <citation type="journal article" date="2015" name="Cell Death Differ.">
        <title>Regulation of neuronal survival and morphology by the E3 ubiquitin ligase RNF157.</title>
        <authorList>
            <person name="Matz A."/>
            <person name="Lee S.J."/>
            <person name="Schwedhelm-Domeyer N."/>
            <person name="Zanini D."/>
            <person name="Holubowska A."/>
            <person name="Kannan M."/>
            <person name="Farnworth M."/>
            <person name="Jahn O."/>
            <person name="Goepfert M.C."/>
            <person name="Stegmueller J."/>
        </authorList>
    </citation>
    <scope>FUNCTION</scope>
    <scope>CATALYTIC ACTIVITY</scope>
    <scope>INTERACTION WITH APBB1</scope>
</reference>
<organism>
    <name type="scientific">Mus musculus</name>
    <name type="common">Mouse</name>
    <dbReference type="NCBI Taxonomy" id="10090"/>
    <lineage>
        <taxon>Eukaryota</taxon>
        <taxon>Metazoa</taxon>
        <taxon>Chordata</taxon>
        <taxon>Craniata</taxon>
        <taxon>Vertebrata</taxon>
        <taxon>Euteleostomi</taxon>
        <taxon>Mammalia</taxon>
        <taxon>Eutheria</taxon>
        <taxon>Euarchontoglires</taxon>
        <taxon>Glires</taxon>
        <taxon>Rodentia</taxon>
        <taxon>Myomorpha</taxon>
        <taxon>Muroidea</taxon>
        <taxon>Muridae</taxon>
        <taxon>Murinae</taxon>
        <taxon>Mus</taxon>
        <taxon>Mus</taxon>
    </lineage>
</organism>
<protein>
    <recommendedName>
        <fullName evidence="8">E3 ubiquitin ligase Rnf157</fullName>
        <ecNumber evidence="6">2.3.2.27</ecNumber>
    </recommendedName>
    <alternativeName>
        <fullName>RING finger protein 157</fullName>
    </alternativeName>
    <alternativeName>
        <fullName evidence="9">RING-type E3 ubiquitin transferase Rnf157</fullName>
    </alternativeName>
</protein>
<comment type="function">
    <text evidence="3 6">E3 ubiquitin ligase that ubiquitinates APBB1 for its degradation by the proteasome and thus prevents apoptosis and promotes survival of neurons (PubMed:25342469). Has a dual role in neurons as it is also required for dendrite growth and maintenance for which its ligase activity is not critical (PubMed:25342469). May act as a scaffold molecule to regulate this process (PubMed:25342469). Acts as a downstream effector of the interconnected PI3K and MAPK signaling pathways and thus participates in the regulation of the cell cycle (By similarity).</text>
</comment>
<comment type="catalytic activity">
    <reaction evidence="6">
        <text>S-ubiquitinyl-[E2 ubiquitin-conjugating enzyme]-L-cysteine + [acceptor protein]-L-lysine = [E2 ubiquitin-conjugating enzyme]-L-cysteine + N(6)-ubiquitinyl-[acceptor protein]-L-lysine.</text>
        <dbReference type="EC" id="2.3.2.27"/>
    </reaction>
</comment>
<comment type="subunit">
    <text evidence="3 6">Interacts with APBB1 (PubMed:25342469). Interacts with CHD1; CHD1-binding controls RNF157 stability (By similarity). Also interacts with ATRN, MEGF8, TECR, MSI2, PLRG1, BYSL, MTERF3, PSMA1, MRPS18B, PRPF4, FASTKD2, SLC25A1, SMU1, CNOT9, MRPS2, MAGT1, FXR2, EMD, PSMD8, HDAC1, RAN, HSD17B12, TXNDC5 and MRPL19 (By similarity).</text>
</comment>
<comment type="subcellular location">
    <subcellularLocation>
        <location evidence="2">Cytoplasm</location>
    </subcellularLocation>
</comment>
<comment type="alternative products">
    <event type="alternative splicing"/>
    <isoform>
        <id>Q3TEL6-1</id>
        <name>1</name>
        <sequence type="displayed"/>
    </isoform>
    <isoform>
        <id>Q3TEL6-2</id>
        <name>2</name>
        <sequence type="described" ref="VSP_021736 VSP_021737"/>
    </isoform>
</comment>
<comment type="domain">
    <text evidence="2">The D-box motifs play a key role in RNF157 stabilization (By similarity).</text>
</comment>
<comment type="sequence caution" evidence="9">
    <conflict type="erroneous initiation">
        <sequence resource="EMBL-CDS" id="BAE41232"/>
    </conflict>
</comment>
<gene>
    <name type="primary">Rnf157</name>
    <name type="synonym">Kiaa1917</name>
</gene>
<sequence length="685" mass="74534">MGALTSRQHAGVEEVDIPSNSVYRYPPKSGSYFASHFIMGGEKFDSTHPEGYLFGENSDLNFLGNRPVAFPYAAPPPQEPVKTLRSLINIRKDTLRLVKCAEEVKSHGEEAGKAKVHYNVEFTFDTDARVAITIYYQATEEFQNGIASYIPKDNSLQSETVHYKRGVFQQFCLPSHTVDPSEWAEEELGFDLDREVYPLVVHAVVDEGDEYFGHCHVLLGTFEKHPDGTFCVKPLKQKQVVDGVSYLLQEIYGIENKYNTQDSKVAEDDVSDNSAECVVCLSDVRDTLILPCRHLCLCNTCADTLRYQANNCPICRLPFRALLQIRAMRKKLGPLSPSSFNPIISSQTSDSEEHSSSENIPPGYEVVSLLEALNGPLTSSPAVPPLHVLGDGHLSGMLPSYGSDGYLPPVRTLSPLDRLSDCNNQGLKLKKSLSKSISQNSSVLHEEEDERSCSESDTQLSQRLSVQHPEEGPDVTPESENLTLSSSGAVDQSSCTGTPLSSTISSPEDPASSSLAQSVMSMASSQISTDTVSSMSGSYIAPGTEEEGEALPSPRAASRAPSEGEETPAESPDSNFAGLPAGEQDAEGNDIIEEEDRSPVREDGQRTCAFLGMECDNNNDFDVASVKALDNKLCSEVCLPGEWQCAEHELGGRRPSARPRSPRGGLGKEASAFRIETVALPGTYV</sequence>
<name>RN157_MOUSE</name>
<proteinExistence type="evidence at protein level"/>
<dbReference type="EC" id="2.3.2.27" evidence="6"/>
<dbReference type="EMBL" id="AL645861">
    <property type="status" value="NOT_ANNOTATED_CDS"/>
    <property type="molecule type" value="Genomic_DNA"/>
</dbReference>
<dbReference type="EMBL" id="AK169566">
    <property type="protein sequence ID" value="BAE41232.1"/>
    <property type="status" value="ALT_INIT"/>
    <property type="molecule type" value="mRNA"/>
</dbReference>
<dbReference type="EMBL" id="AK122571">
    <property type="protein sequence ID" value="BAC65853.1"/>
    <property type="molecule type" value="mRNA"/>
</dbReference>
<dbReference type="CCDS" id="CCDS48984.1">
    <molecule id="Q3TEL6-2"/>
</dbReference>
<dbReference type="FunCoup" id="Q3TEL6">
    <property type="interactions" value="441"/>
</dbReference>
<dbReference type="STRING" id="10090.ENSMUSP00000097776"/>
<dbReference type="iPTMnet" id="Q3TEL6"/>
<dbReference type="PhosphoSitePlus" id="Q3TEL6"/>
<dbReference type="PaxDb" id="10090-ENSMUSP00000097776"/>
<dbReference type="ProteomicsDB" id="301616">
    <molecule id="Q3TEL6-1"/>
</dbReference>
<dbReference type="ProteomicsDB" id="301617">
    <molecule id="Q3TEL6-2"/>
</dbReference>
<dbReference type="Pumba" id="Q3TEL6"/>
<dbReference type="UCSC" id="uc007mkz.1">
    <molecule id="Q3TEL6-1"/>
    <property type="organism name" value="mouse"/>
</dbReference>
<dbReference type="AGR" id="MGI:2442484"/>
<dbReference type="MGI" id="MGI:2442484">
    <property type="gene designation" value="Rnf157"/>
</dbReference>
<dbReference type="eggNOG" id="KOG4265">
    <property type="taxonomic scope" value="Eukaryota"/>
</dbReference>
<dbReference type="InParanoid" id="Q3TEL6"/>
<dbReference type="PhylomeDB" id="Q3TEL6"/>
<dbReference type="ChiTaRS" id="Rnf157">
    <property type="organism name" value="mouse"/>
</dbReference>
<dbReference type="PRO" id="PR:Q3TEL6"/>
<dbReference type="Proteomes" id="UP000000589">
    <property type="component" value="Unplaced"/>
</dbReference>
<dbReference type="RNAct" id="Q3TEL6">
    <property type="molecule type" value="protein"/>
</dbReference>
<dbReference type="GO" id="GO:0044297">
    <property type="term" value="C:cell body"/>
    <property type="evidence" value="ECO:0000250"/>
    <property type="project" value="UniProtKB"/>
</dbReference>
<dbReference type="GO" id="GO:0005737">
    <property type="term" value="C:cytoplasm"/>
    <property type="evidence" value="ECO:0000250"/>
    <property type="project" value="UniProtKB"/>
</dbReference>
<dbReference type="GO" id="GO:0061630">
    <property type="term" value="F:ubiquitin protein ligase activity"/>
    <property type="evidence" value="ECO:0000250"/>
    <property type="project" value="UniProtKB"/>
</dbReference>
<dbReference type="GO" id="GO:0008270">
    <property type="term" value="F:zinc ion binding"/>
    <property type="evidence" value="ECO:0007669"/>
    <property type="project" value="UniProtKB-KW"/>
</dbReference>
<dbReference type="GO" id="GO:0043066">
    <property type="term" value="P:negative regulation of apoptotic process"/>
    <property type="evidence" value="ECO:0000250"/>
    <property type="project" value="UniProtKB"/>
</dbReference>
<dbReference type="GO" id="GO:1903861">
    <property type="term" value="P:positive regulation of dendrite extension"/>
    <property type="evidence" value="ECO:0000250"/>
    <property type="project" value="UniProtKB"/>
</dbReference>
<dbReference type="GO" id="GO:0016567">
    <property type="term" value="P:protein ubiquitination"/>
    <property type="evidence" value="ECO:0000250"/>
    <property type="project" value="UniProtKB"/>
</dbReference>
<dbReference type="CDD" id="cd16817">
    <property type="entry name" value="mRING-HC-C3HC5_RNF157"/>
    <property type="match status" value="1"/>
</dbReference>
<dbReference type="FunFam" id="3.30.40.10:FF:000013">
    <property type="entry name" value="E3 ubiquitin-protein ligase MGRN1 isoform 1"/>
    <property type="match status" value="1"/>
</dbReference>
<dbReference type="Gene3D" id="3.30.40.10">
    <property type="entry name" value="Zinc/RING finger domain, C3HC4 (zinc finger)"/>
    <property type="match status" value="1"/>
</dbReference>
<dbReference type="InterPro" id="IPR045194">
    <property type="entry name" value="MGRN1/RNF157-like"/>
</dbReference>
<dbReference type="InterPro" id="IPR001841">
    <property type="entry name" value="Znf_RING"/>
</dbReference>
<dbReference type="InterPro" id="IPR013083">
    <property type="entry name" value="Znf_RING/FYVE/PHD"/>
</dbReference>
<dbReference type="PANTHER" id="PTHR22996:SF1">
    <property type="entry name" value="E3 UBIQUITIN LIGASE RNF157"/>
    <property type="match status" value="1"/>
</dbReference>
<dbReference type="PANTHER" id="PTHR22996">
    <property type="entry name" value="MAHOGUNIN"/>
    <property type="match status" value="1"/>
</dbReference>
<dbReference type="Pfam" id="PF13920">
    <property type="entry name" value="zf-C3HC4_3"/>
    <property type="match status" value="1"/>
</dbReference>
<dbReference type="SMART" id="SM00184">
    <property type="entry name" value="RING"/>
    <property type="match status" value="1"/>
</dbReference>
<dbReference type="SUPFAM" id="SSF57850">
    <property type="entry name" value="RING/U-box"/>
    <property type="match status" value="1"/>
</dbReference>
<dbReference type="PROSITE" id="PS50089">
    <property type="entry name" value="ZF_RING_2"/>
    <property type="match status" value="1"/>
</dbReference>
<feature type="initiator methionine" description="Removed">
    <location>
        <position position="1"/>
    </location>
</feature>
<feature type="chain" id="PRO_0000261615" description="E3 ubiquitin ligase Rnf157">
    <location>
        <begin position="2"/>
        <end position="685"/>
    </location>
</feature>
<feature type="zinc finger region" description="RING-type" evidence="4">
    <location>
        <begin position="276"/>
        <end position="315"/>
    </location>
</feature>
<feature type="region of interest" description="Disordered" evidence="5">
    <location>
        <begin position="339"/>
        <end position="361"/>
    </location>
</feature>
<feature type="region of interest" description="Disordered" evidence="5">
    <location>
        <begin position="433"/>
        <end position="584"/>
    </location>
</feature>
<feature type="region of interest" description="Disordered" evidence="5">
    <location>
        <begin position="650"/>
        <end position="672"/>
    </location>
</feature>
<feature type="short sequence motif" description="D-box 1" evidence="3">
    <location>
        <begin position="329"/>
        <end position="332"/>
    </location>
</feature>
<feature type="short sequence motif" description="D-box 2" evidence="3">
    <location>
        <begin position="657"/>
        <end position="660"/>
    </location>
</feature>
<feature type="compositionally biased region" description="Low complexity" evidence="5">
    <location>
        <begin position="434"/>
        <end position="443"/>
    </location>
</feature>
<feature type="compositionally biased region" description="Polar residues" evidence="5">
    <location>
        <begin position="478"/>
        <end position="537"/>
    </location>
</feature>
<feature type="compositionally biased region" description="Low complexity" evidence="5">
    <location>
        <begin position="552"/>
        <end position="561"/>
    </location>
</feature>
<feature type="lipid moiety-binding region" description="N-myristoyl glycine" evidence="1">
    <location>
        <position position="2"/>
    </location>
</feature>
<feature type="splice variant" id="VSP_021736" description="In isoform 2." evidence="7">
    <original>I</original>
    <variation>V</variation>
    <location>
        <position position="592"/>
    </location>
</feature>
<feature type="splice variant" id="VSP_021737" description="In isoform 2." evidence="7">
    <original>EWQCAEHELGGRRPSARPRSPRGGLGKEASAFRIETVALPGTYV</original>
    <variation>TWQHEDNTVNCRHTQRRRLSSSSLEDPEENRPCVWDPMAV</variation>
    <location>
        <begin position="642"/>
        <end position="685"/>
    </location>
</feature>
<evidence type="ECO:0000250" key="1"/>
<evidence type="ECO:0000250" key="2">
    <source>
        <dbReference type="UniProtKB" id="M0R5D6"/>
    </source>
</evidence>
<evidence type="ECO:0000250" key="3">
    <source>
        <dbReference type="UniProtKB" id="Q96PX1"/>
    </source>
</evidence>
<evidence type="ECO:0000255" key="4">
    <source>
        <dbReference type="PROSITE-ProRule" id="PRU00175"/>
    </source>
</evidence>
<evidence type="ECO:0000256" key="5">
    <source>
        <dbReference type="SAM" id="MobiDB-lite"/>
    </source>
</evidence>
<evidence type="ECO:0000269" key="6">
    <source>
    </source>
</evidence>
<evidence type="ECO:0000303" key="7">
    <source>
    </source>
</evidence>
<evidence type="ECO:0000303" key="8">
    <source>
    </source>
</evidence>
<evidence type="ECO:0000305" key="9"/>